<comment type="function">
    <text evidence="1">Catalyzes the interconversion of 2-phosphoglycerate and 3-phosphoglycerate.</text>
</comment>
<comment type="catalytic activity">
    <reaction evidence="1">
        <text>(2R)-2-phosphoglycerate = (2R)-3-phosphoglycerate</text>
        <dbReference type="Rhea" id="RHEA:15901"/>
        <dbReference type="ChEBI" id="CHEBI:58272"/>
        <dbReference type="ChEBI" id="CHEBI:58289"/>
        <dbReference type="EC" id="5.4.2.12"/>
    </reaction>
</comment>
<comment type="cofactor">
    <cofactor evidence="1">
        <name>Mn(2+)</name>
        <dbReference type="ChEBI" id="CHEBI:29035"/>
    </cofactor>
    <text evidence="1">Binds 2 manganese ions per subunit.</text>
</comment>
<comment type="pathway">
    <text evidence="1">Carbohydrate degradation; glycolysis; pyruvate from D-glyceraldehyde 3-phosphate: step 3/5.</text>
</comment>
<comment type="subunit">
    <text evidence="1">Monomer.</text>
</comment>
<comment type="interaction">
    <interactant intactId="EBI-2259565">
        <id>P75167</id>
    </interactant>
    <interactant intactId="EBI-1036653">
        <id>P04004</id>
        <label>VTN</label>
    </interactant>
    <organismsDiffer>true</organismsDiffer>
    <experiments>2</experiments>
</comment>
<comment type="similarity">
    <text evidence="1">Belongs to the BPG-independent phosphoglycerate mutase family.</text>
</comment>
<name>GPMI_MYCPN</name>
<gene>
    <name evidence="1" type="primary">gpmI</name>
    <name type="synonym">pgm</name>
    <name type="ordered locus">MPN_628</name>
    <name type="ORF">MP214</name>
</gene>
<sequence>MHKKVLLAILDGYGISNKQHGNAVYHAKTPALDSLIKDYPCVMLEASGEAVGLPQGQIGNSEVGHLNIGAGRIVYTGLSLINQNIKTGAFHHNQVLLEAIARAKANNAKLHLIGLFSHGGVHSHMDHLYALIKLAAPQVKMVLHLFGDGRDVAPCTMKSDLEAFMVFLKDYHNVIIGTLGGRYYGMDRDQRWDREEIAYNAILGNSKASFTDPVAYVQSAYDQKVTDEFLYPAVNGNVDKEQFALKDHDSVIFFNFRPDRARQMSHMLFQTDYYDYTPKAGRKYNLFFVTMMNYEGIKPSAVVFPPETIPNTFGEVIAHNKLKQLRIAETEKYAHVTFFFDGGVEVDLPNETKCMVPSLKVATYDLAPEMACKGITDQLLNQINQFDLTVLNFANPDMVGHTGNYAACVQGLEALDVQIQRIIDFCKANHITLFLTADHGNAEEMIDSNNNPVTKHTVNKVPFVCTDTNIDLQQDSASLANIAPTILAYLGLKQPAEMTANSLLISKK</sequence>
<reference key="1">
    <citation type="journal article" date="1996" name="Nucleic Acids Res.">
        <title>Complete sequence analysis of the genome of the bacterium Mycoplasma pneumoniae.</title>
        <authorList>
            <person name="Himmelreich R."/>
            <person name="Hilbert H."/>
            <person name="Plagens H."/>
            <person name="Pirkl E."/>
            <person name="Li B.-C."/>
            <person name="Herrmann R."/>
        </authorList>
    </citation>
    <scope>NUCLEOTIDE SEQUENCE [LARGE SCALE GENOMIC DNA]</scope>
    <source>
        <strain>ATCC 29342 / M129 / Subtype 1</strain>
    </source>
</reference>
<protein>
    <recommendedName>
        <fullName evidence="1">2,3-bisphosphoglycerate-independent phosphoglycerate mutase</fullName>
        <shortName evidence="1">BPG-independent PGAM</shortName>
        <shortName evidence="1">Phosphoglyceromutase</shortName>
        <shortName evidence="1">iPGM</shortName>
        <ecNumber evidence="1">5.4.2.12</ecNumber>
    </recommendedName>
</protein>
<proteinExistence type="evidence at protein level"/>
<organism>
    <name type="scientific">Mycoplasma pneumoniae (strain ATCC 29342 / M129 / Subtype 1)</name>
    <name type="common">Mycoplasmoides pneumoniae</name>
    <dbReference type="NCBI Taxonomy" id="272634"/>
    <lineage>
        <taxon>Bacteria</taxon>
        <taxon>Bacillati</taxon>
        <taxon>Mycoplasmatota</taxon>
        <taxon>Mycoplasmoidales</taxon>
        <taxon>Mycoplasmoidaceae</taxon>
        <taxon>Mycoplasmoides</taxon>
    </lineage>
</organism>
<dbReference type="EC" id="5.4.2.12" evidence="1"/>
<dbReference type="EMBL" id="U00089">
    <property type="protein sequence ID" value="AAB95862.1"/>
    <property type="molecule type" value="Genomic_DNA"/>
</dbReference>
<dbReference type="PIR" id="S73540">
    <property type="entry name" value="S73540"/>
</dbReference>
<dbReference type="RefSeq" id="NP_110317.1">
    <property type="nucleotide sequence ID" value="NC_000912.1"/>
</dbReference>
<dbReference type="RefSeq" id="WP_010874985.1">
    <property type="nucleotide sequence ID" value="NZ_OU342337.1"/>
</dbReference>
<dbReference type="SMR" id="P75167"/>
<dbReference type="IntAct" id="P75167">
    <property type="interactions" value="6"/>
</dbReference>
<dbReference type="STRING" id="272634.MPN_628"/>
<dbReference type="EnsemblBacteria" id="AAB95862">
    <property type="protein sequence ID" value="AAB95862"/>
    <property type="gene ID" value="MPN_628"/>
</dbReference>
<dbReference type="KEGG" id="mpn:MPN_628"/>
<dbReference type="PATRIC" id="fig|272634.6.peg.692"/>
<dbReference type="HOGENOM" id="CLU_026099_2_0_14"/>
<dbReference type="OrthoDB" id="9800863at2"/>
<dbReference type="BioCyc" id="MetaCyc:MONOMER-550"/>
<dbReference type="BioCyc" id="MPNE272634:G1GJ3-1009-MONOMER"/>
<dbReference type="UniPathway" id="UPA00109">
    <property type="reaction ID" value="UER00186"/>
</dbReference>
<dbReference type="Proteomes" id="UP000000808">
    <property type="component" value="Chromosome"/>
</dbReference>
<dbReference type="GO" id="GO:0005829">
    <property type="term" value="C:cytosol"/>
    <property type="evidence" value="ECO:0007669"/>
    <property type="project" value="TreeGrafter"/>
</dbReference>
<dbReference type="GO" id="GO:0016020">
    <property type="term" value="C:membrane"/>
    <property type="evidence" value="ECO:0000314"/>
    <property type="project" value="AgBase"/>
</dbReference>
<dbReference type="GO" id="GO:0030145">
    <property type="term" value="F:manganese ion binding"/>
    <property type="evidence" value="ECO:0007669"/>
    <property type="project" value="UniProtKB-UniRule"/>
</dbReference>
<dbReference type="GO" id="GO:0004619">
    <property type="term" value="F:phosphoglycerate mutase activity"/>
    <property type="evidence" value="ECO:0007669"/>
    <property type="project" value="UniProtKB-EC"/>
</dbReference>
<dbReference type="GO" id="GO:0006007">
    <property type="term" value="P:glucose catabolic process"/>
    <property type="evidence" value="ECO:0007669"/>
    <property type="project" value="InterPro"/>
</dbReference>
<dbReference type="GO" id="GO:0006096">
    <property type="term" value="P:glycolytic process"/>
    <property type="evidence" value="ECO:0007669"/>
    <property type="project" value="UniProtKB-UniRule"/>
</dbReference>
<dbReference type="GO" id="GO:0051919">
    <property type="term" value="P:positive regulation of fibrinolysis"/>
    <property type="evidence" value="ECO:0000314"/>
    <property type="project" value="AgBase"/>
</dbReference>
<dbReference type="CDD" id="cd16010">
    <property type="entry name" value="iPGM"/>
    <property type="match status" value="1"/>
</dbReference>
<dbReference type="FunFam" id="3.40.1450.10:FF:000002">
    <property type="entry name" value="2,3-bisphosphoglycerate-independent phosphoglycerate mutase"/>
    <property type="match status" value="1"/>
</dbReference>
<dbReference type="Gene3D" id="3.40.720.10">
    <property type="entry name" value="Alkaline Phosphatase, subunit A"/>
    <property type="match status" value="1"/>
</dbReference>
<dbReference type="Gene3D" id="3.40.1450.10">
    <property type="entry name" value="BPG-independent phosphoglycerate mutase, domain B"/>
    <property type="match status" value="1"/>
</dbReference>
<dbReference type="HAMAP" id="MF_01038">
    <property type="entry name" value="GpmI"/>
    <property type="match status" value="1"/>
</dbReference>
<dbReference type="InterPro" id="IPR017850">
    <property type="entry name" value="Alkaline_phosphatase_core_sf"/>
</dbReference>
<dbReference type="InterPro" id="IPR011258">
    <property type="entry name" value="BPG-indep_PGM_N"/>
</dbReference>
<dbReference type="InterPro" id="IPR006124">
    <property type="entry name" value="Metalloenzyme"/>
</dbReference>
<dbReference type="InterPro" id="IPR036646">
    <property type="entry name" value="PGAM_B_sf"/>
</dbReference>
<dbReference type="InterPro" id="IPR005995">
    <property type="entry name" value="Pgm_bpd_ind"/>
</dbReference>
<dbReference type="NCBIfam" id="TIGR01307">
    <property type="entry name" value="pgm_bpd_ind"/>
    <property type="match status" value="1"/>
</dbReference>
<dbReference type="PANTHER" id="PTHR31637">
    <property type="entry name" value="2,3-BISPHOSPHOGLYCERATE-INDEPENDENT PHOSPHOGLYCERATE MUTASE"/>
    <property type="match status" value="1"/>
</dbReference>
<dbReference type="PANTHER" id="PTHR31637:SF0">
    <property type="entry name" value="2,3-BISPHOSPHOGLYCERATE-INDEPENDENT PHOSPHOGLYCERATE MUTASE"/>
    <property type="match status" value="1"/>
</dbReference>
<dbReference type="Pfam" id="PF06415">
    <property type="entry name" value="iPGM_N"/>
    <property type="match status" value="1"/>
</dbReference>
<dbReference type="Pfam" id="PF01676">
    <property type="entry name" value="Metalloenzyme"/>
    <property type="match status" value="1"/>
</dbReference>
<dbReference type="PIRSF" id="PIRSF001492">
    <property type="entry name" value="IPGAM"/>
    <property type="match status" value="1"/>
</dbReference>
<dbReference type="SUPFAM" id="SSF64158">
    <property type="entry name" value="2,3-Bisphosphoglycerate-independent phosphoglycerate mutase, substrate-binding domain"/>
    <property type="match status" value="1"/>
</dbReference>
<dbReference type="SUPFAM" id="SSF53649">
    <property type="entry name" value="Alkaline phosphatase-like"/>
    <property type="match status" value="1"/>
</dbReference>
<keyword id="KW-0324">Glycolysis</keyword>
<keyword id="KW-0413">Isomerase</keyword>
<keyword id="KW-0464">Manganese</keyword>
<keyword id="KW-0479">Metal-binding</keyword>
<keyword id="KW-1185">Reference proteome</keyword>
<accession>P75167</accession>
<feature type="chain" id="PRO_0000212175" description="2,3-bisphosphoglycerate-independent phosphoglycerate mutase">
    <location>
        <begin position="1"/>
        <end position="508"/>
    </location>
</feature>
<feature type="active site" description="Phosphoserine intermediate" evidence="1">
    <location>
        <position position="61"/>
    </location>
</feature>
<feature type="binding site" evidence="1">
    <location>
        <position position="11"/>
    </location>
    <ligand>
        <name>Mn(2+)</name>
        <dbReference type="ChEBI" id="CHEBI:29035"/>
        <label>2</label>
    </ligand>
</feature>
<feature type="binding site" evidence="1">
    <location>
        <position position="61"/>
    </location>
    <ligand>
        <name>Mn(2+)</name>
        <dbReference type="ChEBI" id="CHEBI:29035"/>
        <label>2</label>
    </ligand>
</feature>
<feature type="binding site" evidence="1">
    <location>
        <position position="122"/>
    </location>
    <ligand>
        <name>substrate</name>
    </ligand>
</feature>
<feature type="binding site" evidence="1">
    <location>
        <begin position="150"/>
        <end position="151"/>
    </location>
    <ligand>
        <name>substrate</name>
    </ligand>
</feature>
<feature type="binding site" evidence="1">
    <location>
        <position position="182"/>
    </location>
    <ligand>
        <name>substrate</name>
    </ligand>
</feature>
<feature type="binding site" evidence="1">
    <location>
        <position position="188"/>
    </location>
    <ligand>
        <name>substrate</name>
    </ligand>
</feature>
<feature type="binding site" evidence="1">
    <location>
        <begin position="257"/>
        <end position="260"/>
    </location>
    <ligand>
        <name>substrate</name>
    </ligand>
</feature>
<feature type="binding site" evidence="1">
    <location>
        <position position="332"/>
    </location>
    <ligand>
        <name>substrate</name>
    </ligand>
</feature>
<feature type="binding site" evidence="1">
    <location>
        <position position="397"/>
    </location>
    <ligand>
        <name>Mn(2+)</name>
        <dbReference type="ChEBI" id="CHEBI:29035"/>
        <label>1</label>
    </ligand>
</feature>
<feature type="binding site" evidence="1">
    <location>
        <position position="401"/>
    </location>
    <ligand>
        <name>Mn(2+)</name>
        <dbReference type="ChEBI" id="CHEBI:29035"/>
        <label>1</label>
    </ligand>
</feature>
<feature type="binding site" evidence="1">
    <location>
        <position position="438"/>
    </location>
    <ligand>
        <name>Mn(2+)</name>
        <dbReference type="ChEBI" id="CHEBI:29035"/>
        <label>2</label>
    </ligand>
</feature>
<feature type="binding site" evidence="1">
    <location>
        <position position="439"/>
    </location>
    <ligand>
        <name>Mn(2+)</name>
        <dbReference type="ChEBI" id="CHEBI:29035"/>
        <label>2</label>
    </ligand>
</feature>
<feature type="binding site" evidence="1">
    <location>
        <position position="456"/>
    </location>
    <ligand>
        <name>Mn(2+)</name>
        <dbReference type="ChEBI" id="CHEBI:29035"/>
        <label>1</label>
    </ligand>
</feature>
<evidence type="ECO:0000255" key="1">
    <source>
        <dbReference type="HAMAP-Rule" id="MF_01038"/>
    </source>
</evidence>